<protein>
    <recommendedName>
        <fullName evidence="1">3-isopropylmalate dehydratase large subunit</fullName>
        <ecNumber evidence="1">4.2.1.33</ecNumber>
    </recommendedName>
    <alternativeName>
        <fullName evidence="1">Alpha-IPM isomerase</fullName>
        <shortName evidence="1">IPMI</shortName>
    </alternativeName>
    <alternativeName>
        <fullName evidence="1">Isopropylmalate isomerase</fullName>
    </alternativeName>
</protein>
<proteinExistence type="inferred from homology"/>
<accession>Q48K99</accession>
<comment type="function">
    <text evidence="1">Catalyzes the isomerization between 2-isopropylmalate and 3-isopropylmalate, via the formation of 2-isopropylmaleate.</text>
</comment>
<comment type="catalytic activity">
    <reaction evidence="1">
        <text>(2R,3S)-3-isopropylmalate = (2S)-2-isopropylmalate</text>
        <dbReference type="Rhea" id="RHEA:32287"/>
        <dbReference type="ChEBI" id="CHEBI:1178"/>
        <dbReference type="ChEBI" id="CHEBI:35121"/>
        <dbReference type="EC" id="4.2.1.33"/>
    </reaction>
</comment>
<comment type="cofactor">
    <cofactor evidence="1">
        <name>[4Fe-4S] cluster</name>
        <dbReference type="ChEBI" id="CHEBI:49883"/>
    </cofactor>
    <text evidence="1">Binds 1 [4Fe-4S] cluster per subunit.</text>
</comment>
<comment type="pathway">
    <text evidence="1">Amino-acid biosynthesis; L-leucine biosynthesis; L-leucine from 3-methyl-2-oxobutanoate: step 2/4.</text>
</comment>
<comment type="subunit">
    <text evidence="1">Heterodimer of LeuC and LeuD.</text>
</comment>
<comment type="similarity">
    <text evidence="1">Belongs to the aconitase/IPM isomerase family. LeuC type 1 subfamily.</text>
</comment>
<feature type="chain" id="PRO_0000076787" description="3-isopropylmalate dehydratase large subunit">
    <location>
        <begin position="1"/>
        <end position="474"/>
    </location>
</feature>
<feature type="binding site" evidence="1">
    <location>
        <position position="352"/>
    </location>
    <ligand>
        <name>[4Fe-4S] cluster</name>
        <dbReference type="ChEBI" id="CHEBI:49883"/>
    </ligand>
</feature>
<feature type="binding site" evidence="1">
    <location>
        <position position="413"/>
    </location>
    <ligand>
        <name>[4Fe-4S] cluster</name>
        <dbReference type="ChEBI" id="CHEBI:49883"/>
    </ligand>
</feature>
<feature type="binding site" evidence="1">
    <location>
        <position position="416"/>
    </location>
    <ligand>
        <name>[4Fe-4S] cluster</name>
        <dbReference type="ChEBI" id="CHEBI:49883"/>
    </ligand>
</feature>
<gene>
    <name evidence="1" type="primary">leuC</name>
    <name type="ordered locus">PSPPH_1952</name>
</gene>
<evidence type="ECO:0000255" key="1">
    <source>
        <dbReference type="HAMAP-Rule" id="MF_01026"/>
    </source>
</evidence>
<reference key="1">
    <citation type="journal article" date="2005" name="J. Bacteriol.">
        <title>Whole-genome sequence analysis of Pseudomonas syringae pv. phaseolicola 1448A reveals divergence among pathovars in genes involved in virulence and transposition.</title>
        <authorList>
            <person name="Joardar V."/>
            <person name="Lindeberg M."/>
            <person name="Jackson R.W."/>
            <person name="Selengut J."/>
            <person name="Dodson R."/>
            <person name="Brinkac L.M."/>
            <person name="Daugherty S.C."/>
            <person name="DeBoy R.T."/>
            <person name="Durkin A.S."/>
            <person name="Gwinn Giglio M."/>
            <person name="Madupu R."/>
            <person name="Nelson W.C."/>
            <person name="Rosovitz M.J."/>
            <person name="Sullivan S.A."/>
            <person name="Crabtree J."/>
            <person name="Creasy T."/>
            <person name="Davidsen T.M."/>
            <person name="Haft D.H."/>
            <person name="Zafar N."/>
            <person name="Zhou L."/>
            <person name="Halpin R."/>
            <person name="Holley T."/>
            <person name="Khouri H.M."/>
            <person name="Feldblyum T.V."/>
            <person name="White O."/>
            <person name="Fraser C.M."/>
            <person name="Chatterjee A.K."/>
            <person name="Cartinhour S."/>
            <person name="Schneider D."/>
            <person name="Mansfield J.W."/>
            <person name="Collmer A."/>
            <person name="Buell R."/>
        </authorList>
    </citation>
    <scope>NUCLEOTIDE SEQUENCE [LARGE SCALE GENOMIC DNA]</scope>
    <source>
        <strain>1448A / Race 6</strain>
    </source>
</reference>
<sequence>MAGKTLYDKLWDSHLVKQRDDGSALIYIDRHIIHEVTSPQAFEGLRLAKRKPWRIDSIIATPDHNVPTTSERKGGIDAIEDQVSRLQVQTLDDNCDEYGITEFKMNDPRQGIVHVIGPEQGATLPGMSVVCGDSHTSTHGAFGALAHGIGTSEVEHVLATQCLVAKKMKNMLVSVEGQLPFGVTAKDIVLAVIGKIGTAGGNGYAIEFAGSAIRDLSIEGRMTICNMSIEAGARVGMVATDEKTVEYVKGRPFAPKGAEWDLAVEAWKDLVSDADAVFDTVVRLDAAQIKPQVSWGTSPEMVLAVDQNVPDPAQEPDLVKRGSIERALKYMGLKANQPITDIQLDRVFIGSCTNSRIEDLRAAADVAKGRKVAATIKQAIVVPGSGLIKEQAEKEGLDKVFIEAGFEWREPGCSMCLAMNPDRLGSGEHCASTSNRNFEGRQGAGGRTHLVSPAMAAAAAVNGRFIDVRDLIQL</sequence>
<name>LEUC_PSE14</name>
<dbReference type="EC" id="4.2.1.33" evidence="1"/>
<dbReference type="EMBL" id="CP000058">
    <property type="protein sequence ID" value="AAZ35548.1"/>
    <property type="molecule type" value="Genomic_DNA"/>
</dbReference>
<dbReference type="RefSeq" id="WP_002552954.1">
    <property type="nucleotide sequence ID" value="NC_005773.3"/>
</dbReference>
<dbReference type="SMR" id="Q48K99"/>
<dbReference type="GeneID" id="61869367"/>
<dbReference type="KEGG" id="psp:PSPPH_1952"/>
<dbReference type="eggNOG" id="COG0065">
    <property type="taxonomic scope" value="Bacteria"/>
</dbReference>
<dbReference type="HOGENOM" id="CLU_006714_3_4_6"/>
<dbReference type="UniPathway" id="UPA00048">
    <property type="reaction ID" value="UER00071"/>
</dbReference>
<dbReference type="Proteomes" id="UP000000551">
    <property type="component" value="Chromosome"/>
</dbReference>
<dbReference type="GO" id="GO:0003861">
    <property type="term" value="F:3-isopropylmalate dehydratase activity"/>
    <property type="evidence" value="ECO:0007669"/>
    <property type="project" value="UniProtKB-UniRule"/>
</dbReference>
<dbReference type="GO" id="GO:0051539">
    <property type="term" value="F:4 iron, 4 sulfur cluster binding"/>
    <property type="evidence" value="ECO:0007669"/>
    <property type="project" value="UniProtKB-KW"/>
</dbReference>
<dbReference type="GO" id="GO:0046872">
    <property type="term" value="F:metal ion binding"/>
    <property type="evidence" value="ECO:0007669"/>
    <property type="project" value="UniProtKB-KW"/>
</dbReference>
<dbReference type="GO" id="GO:0009098">
    <property type="term" value="P:L-leucine biosynthetic process"/>
    <property type="evidence" value="ECO:0007669"/>
    <property type="project" value="UniProtKB-UniRule"/>
</dbReference>
<dbReference type="CDD" id="cd01583">
    <property type="entry name" value="IPMI"/>
    <property type="match status" value="1"/>
</dbReference>
<dbReference type="FunFam" id="3.30.499.10:FF:000007">
    <property type="entry name" value="3-isopropylmalate dehydratase large subunit"/>
    <property type="match status" value="1"/>
</dbReference>
<dbReference type="Gene3D" id="3.30.499.10">
    <property type="entry name" value="Aconitase, domain 3"/>
    <property type="match status" value="2"/>
</dbReference>
<dbReference type="HAMAP" id="MF_01026">
    <property type="entry name" value="LeuC_type1"/>
    <property type="match status" value="1"/>
</dbReference>
<dbReference type="InterPro" id="IPR004430">
    <property type="entry name" value="3-IsopropMal_deHydase_lsu"/>
</dbReference>
<dbReference type="InterPro" id="IPR015931">
    <property type="entry name" value="Acnase/IPM_dHydase_lsu_aba_1/3"/>
</dbReference>
<dbReference type="InterPro" id="IPR001030">
    <property type="entry name" value="Acoase/IPM_deHydtase_lsu_aba"/>
</dbReference>
<dbReference type="InterPro" id="IPR018136">
    <property type="entry name" value="Aconitase_4Fe-4S_BS"/>
</dbReference>
<dbReference type="InterPro" id="IPR036008">
    <property type="entry name" value="Aconitase_4Fe-4S_dom"/>
</dbReference>
<dbReference type="InterPro" id="IPR050067">
    <property type="entry name" value="IPM_dehydratase_rel_enz"/>
</dbReference>
<dbReference type="InterPro" id="IPR033941">
    <property type="entry name" value="IPMI_cat"/>
</dbReference>
<dbReference type="NCBIfam" id="TIGR00170">
    <property type="entry name" value="leuC"/>
    <property type="match status" value="1"/>
</dbReference>
<dbReference type="NCBIfam" id="NF004016">
    <property type="entry name" value="PRK05478.1"/>
    <property type="match status" value="1"/>
</dbReference>
<dbReference type="NCBIfam" id="NF009116">
    <property type="entry name" value="PRK12466.1"/>
    <property type="match status" value="1"/>
</dbReference>
<dbReference type="PANTHER" id="PTHR43822:SF9">
    <property type="entry name" value="3-ISOPROPYLMALATE DEHYDRATASE"/>
    <property type="match status" value="1"/>
</dbReference>
<dbReference type="PANTHER" id="PTHR43822">
    <property type="entry name" value="HOMOACONITASE, MITOCHONDRIAL-RELATED"/>
    <property type="match status" value="1"/>
</dbReference>
<dbReference type="Pfam" id="PF00330">
    <property type="entry name" value="Aconitase"/>
    <property type="match status" value="1"/>
</dbReference>
<dbReference type="PRINTS" id="PR00415">
    <property type="entry name" value="ACONITASE"/>
</dbReference>
<dbReference type="SUPFAM" id="SSF53732">
    <property type="entry name" value="Aconitase iron-sulfur domain"/>
    <property type="match status" value="1"/>
</dbReference>
<dbReference type="PROSITE" id="PS00450">
    <property type="entry name" value="ACONITASE_1"/>
    <property type="match status" value="1"/>
</dbReference>
<dbReference type="PROSITE" id="PS01244">
    <property type="entry name" value="ACONITASE_2"/>
    <property type="match status" value="1"/>
</dbReference>
<keyword id="KW-0004">4Fe-4S</keyword>
<keyword id="KW-0028">Amino-acid biosynthesis</keyword>
<keyword id="KW-0100">Branched-chain amino acid biosynthesis</keyword>
<keyword id="KW-0408">Iron</keyword>
<keyword id="KW-0411">Iron-sulfur</keyword>
<keyword id="KW-0432">Leucine biosynthesis</keyword>
<keyword id="KW-0456">Lyase</keyword>
<keyword id="KW-0479">Metal-binding</keyword>
<organism>
    <name type="scientific">Pseudomonas savastanoi pv. phaseolicola (strain 1448A / Race 6)</name>
    <name type="common">Pseudomonas syringae pv. phaseolicola (strain 1448A / Race 6)</name>
    <dbReference type="NCBI Taxonomy" id="264730"/>
    <lineage>
        <taxon>Bacteria</taxon>
        <taxon>Pseudomonadati</taxon>
        <taxon>Pseudomonadota</taxon>
        <taxon>Gammaproteobacteria</taxon>
        <taxon>Pseudomonadales</taxon>
        <taxon>Pseudomonadaceae</taxon>
        <taxon>Pseudomonas</taxon>
    </lineage>
</organism>